<keyword id="KW-0010">Activator</keyword>
<keyword id="KW-0238">DNA-binding</keyword>
<keyword id="KW-0244">Early protein</keyword>
<keyword id="KW-1078">G1/S host cell cycle checkpoint dysregulation by virus</keyword>
<keyword id="KW-1035">Host cytoplasm</keyword>
<keyword id="KW-1048">Host nucleus</keyword>
<keyword id="KW-0945">Host-virus interaction</keyword>
<keyword id="KW-1090">Inhibition of host innate immune response by virus</keyword>
<keyword id="KW-1114">Inhibition of host interferon signaling pathway by virus</keyword>
<keyword id="KW-0922">Interferon antiviral system evasion</keyword>
<keyword id="KW-0479">Metal-binding</keyword>
<keyword id="KW-1121">Modulation of host cell cycle by virus</keyword>
<keyword id="KW-0553">Oncogene</keyword>
<keyword id="KW-0804">Transcription</keyword>
<keyword id="KW-0805">Transcription regulation</keyword>
<keyword id="KW-0899">Viral immunoevasion</keyword>
<keyword id="KW-0862">Zinc</keyword>
<keyword id="KW-0863">Zinc-finger</keyword>
<organismHost>
    <name type="scientific">Homo sapiens</name>
    <name type="common">Human</name>
    <dbReference type="NCBI Taxonomy" id="9606"/>
</organismHost>
<reference key="1">
    <citation type="journal article" date="1990" name="Virology">
        <title>Genome organization and taxonomic position of human papillomavirus type 47 inferred from its DNA sequence.</title>
        <authorList>
            <person name="Kiyono T."/>
            <person name="Adachi A."/>
            <person name="Ishibashi M."/>
        </authorList>
    </citation>
    <scope>NUCLEOTIDE SEQUENCE [GENOMIC DNA]</scope>
</reference>
<reference key="2">
    <citation type="journal article" date="2002" name="Rev. Med. Virol.">
        <title>Interactions of SV40 large T antigen and other viral proteins with retinoblastoma tumour suppressor.</title>
        <authorList>
            <person name="Lee C."/>
            <person name="Cho Y."/>
        </authorList>
    </citation>
    <scope>REVIEW</scope>
</reference>
<feature type="chain" id="PRO_0000133443" description="Protein E7">
    <location>
        <begin position="1"/>
        <end position="103"/>
    </location>
</feature>
<feature type="zinc finger region" evidence="1">
    <location>
        <begin position="56"/>
        <end position="94"/>
    </location>
</feature>
<feature type="region of interest" description="E7 terminal domain" evidence="1">
    <location>
        <begin position="1"/>
        <end position="45"/>
    </location>
</feature>
<feature type="short sequence motif" description="LXCXE motif; interaction with host RB1 and TMEM173/STING" evidence="1">
    <location>
        <begin position="27"/>
        <end position="31"/>
    </location>
</feature>
<feature type="short sequence motif" description="Nuclear export signal" evidence="1">
    <location>
        <begin position="76"/>
        <end position="84"/>
    </location>
</feature>
<evidence type="ECO:0000255" key="1">
    <source>
        <dbReference type="HAMAP-Rule" id="MF_04004"/>
    </source>
</evidence>
<name>VE7_HPV47</name>
<proteinExistence type="inferred from homology"/>
<comment type="function">
    <text evidence="1">Plays a role in viral genome replication by driving entry of quiescent cells into the cell cycle. Stimulation of progression from G1 to S phase allows the virus to efficiently use the cellular DNA replicating machinery to achieve viral genome replication. E7 protein has both transforming and trans-activating activities. Induces the disassembly of the E2F1 transcription factor from RB1, with subsequent transcriptional activation of E2F1-regulated S-phase genes. Interferes with host histone deacetylation mediated by HDAC1 and HDAC2, leading to transcription activation. Also plays a role in the inhibition of both antiviral and antiproliferative functions of host interferon alpha. Interaction with host TMEM173/STING impairs the ability of TMEM173/STING to sense cytosolic DNA and promote the production of type I interferon (IFN-alpha and IFN-beta).</text>
</comment>
<comment type="subunit">
    <text evidence="1">Homodimer. Homooligomer. Interacts with host RB1; this interaction induces dissociation of RB1-E2F1 complex thereby disrupting RB1 activity. Interacts with host EP300; this interaction represses EP300 transcriptional activity. Interacts with protein E2; this interaction inhibits E7 oncogenic activity. Interacts with host TMEM173/STING; this interaction impairs the ability of TMEM173/STING to sense cytosolic DNA and promote the production of type I interferon (IFN-alpha and IFN-beta).</text>
</comment>
<comment type="subcellular location">
    <subcellularLocation>
        <location evidence="1">Host cytoplasm</location>
    </subcellularLocation>
    <subcellularLocation>
        <location evidence="1">Host nucleus</location>
    </subcellularLocation>
    <text evidence="1">Predominantly found in the host nucleus.</text>
</comment>
<comment type="domain">
    <text evidence="1">The E7 terminal domain is an intrinsically disordered domain, whose flexibility and conformational transitions confer target adaptability to the oncoprotein. It allows adaptation to a variety of protein targets and exposes the PEST degradation sequence that regulates its turnover in the cell.</text>
</comment>
<comment type="PTM">
    <text evidence="1">Highly phosphorylated.</text>
</comment>
<comment type="similarity">
    <text evidence="1">Belongs to the papillomaviridae E7 protein family.</text>
</comment>
<accession>P22423</accession>
<protein>
    <recommendedName>
        <fullName evidence="1">Protein E7</fullName>
    </recommendedName>
</protein>
<gene>
    <name evidence="1" type="primary">E7</name>
</gene>
<dbReference type="EMBL" id="M32305">
    <property type="protein sequence ID" value="AAA46977.1"/>
    <property type="molecule type" value="Genomic_DNA"/>
</dbReference>
<dbReference type="PIR" id="B35324">
    <property type="entry name" value="W7WL47"/>
</dbReference>
<dbReference type="SMR" id="P22423"/>
<dbReference type="Proteomes" id="UP000008697">
    <property type="component" value="Genome"/>
</dbReference>
<dbReference type="GO" id="GO:0030430">
    <property type="term" value="C:host cell cytoplasm"/>
    <property type="evidence" value="ECO:0007669"/>
    <property type="project" value="UniProtKB-SubCell"/>
</dbReference>
<dbReference type="GO" id="GO:0042025">
    <property type="term" value="C:host cell nucleus"/>
    <property type="evidence" value="ECO:0007669"/>
    <property type="project" value="UniProtKB-SubCell"/>
</dbReference>
<dbReference type="GO" id="GO:0003677">
    <property type="term" value="F:DNA binding"/>
    <property type="evidence" value="ECO:0007669"/>
    <property type="project" value="UniProtKB-UniRule"/>
</dbReference>
<dbReference type="GO" id="GO:0003700">
    <property type="term" value="F:DNA-binding transcription factor activity"/>
    <property type="evidence" value="ECO:0007669"/>
    <property type="project" value="UniProtKB-UniRule"/>
</dbReference>
<dbReference type="GO" id="GO:0019904">
    <property type="term" value="F:protein domain specific binding"/>
    <property type="evidence" value="ECO:0007669"/>
    <property type="project" value="UniProtKB-UniRule"/>
</dbReference>
<dbReference type="GO" id="GO:0008270">
    <property type="term" value="F:zinc ion binding"/>
    <property type="evidence" value="ECO:0007669"/>
    <property type="project" value="UniProtKB-KW"/>
</dbReference>
<dbReference type="GO" id="GO:0006351">
    <property type="term" value="P:DNA-templated transcription"/>
    <property type="evidence" value="ECO:0007669"/>
    <property type="project" value="UniProtKB-UniRule"/>
</dbReference>
<dbReference type="GO" id="GO:0039645">
    <property type="term" value="P:symbiont-mediated perturbation of host cell cycle G1/S transition checkpoint"/>
    <property type="evidence" value="ECO:0007669"/>
    <property type="project" value="UniProtKB-UniRule"/>
</dbReference>
<dbReference type="GO" id="GO:0052170">
    <property type="term" value="P:symbiont-mediated suppression of host innate immune response"/>
    <property type="evidence" value="ECO:0007669"/>
    <property type="project" value="UniProtKB-KW"/>
</dbReference>
<dbReference type="GO" id="GO:0039502">
    <property type="term" value="P:symbiont-mediated suppression of host type I interferon-mediated signaling pathway"/>
    <property type="evidence" value="ECO:0007669"/>
    <property type="project" value="UniProtKB-UniRule"/>
</dbReference>
<dbReference type="Gene3D" id="3.30.160.330">
    <property type="match status" value="1"/>
</dbReference>
<dbReference type="HAMAP" id="MF_04004">
    <property type="entry name" value="PPV_E7"/>
    <property type="match status" value="1"/>
</dbReference>
<dbReference type="InterPro" id="IPR000148">
    <property type="entry name" value="Papilloma_E7"/>
</dbReference>
<dbReference type="Pfam" id="PF00527">
    <property type="entry name" value="E7"/>
    <property type="match status" value="1"/>
</dbReference>
<dbReference type="PIRSF" id="PIRSF003407">
    <property type="entry name" value="Papvi_E7"/>
    <property type="match status" value="1"/>
</dbReference>
<dbReference type="SUPFAM" id="SSF161234">
    <property type="entry name" value="E7 C-terminal domain-like"/>
    <property type="match status" value="1"/>
</dbReference>
<sequence>MIGKEVTVRDIVLELSEVQPEVLPVDLFCDEELPNEQQAEEELDIDRVVFKVIAPCGCSCCEVKLRIFVNATNRGIRTFQELLTGDLQLLCPECRGNCKHGGF</sequence>
<organism>
    <name type="scientific">Human papillomavirus 47</name>
    <dbReference type="NCBI Taxonomy" id="10594"/>
    <lineage>
        <taxon>Viruses</taxon>
        <taxon>Monodnaviria</taxon>
        <taxon>Shotokuvirae</taxon>
        <taxon>Cossaviricota</taxon>
        <taxon>Papovaviricetes</taxon>
        <taxon>Zurhausenvirales</taxon>
        <taxon>Papillomaviridae</taxon>
        <taxon>Firstpapillomavirinae</taxon>
        <taxon>Betapapillomavirus</taxon>
        <taxon>Betapapillomavirus 1</taxon>
    </lineage>
</organism>